<gene>
    <name type="primary">Rplp1</name>
</gene>
<keyword id="KW-0007">Acetylation</keyword>
<keyword id="KW-1017">Isopeptide bond</keyword>
<keyword id="KW-0597">Phosphoprotein</keyword>
<keyword id="KW-1185">Reference proteome</keyword>
<keyword id="KW-0687">Ribonucleoprotein</keyword>
<keyword id="KW-0689">Ribosomal protein</keyword>
<keyword id="KW-0832">Ubl conjugation</keyword>
<dbReference type="EMBL" id="U29402">
    <property type="protein sequence ID" value="AAA70106.1"/>
    <property type="molecule type" value="mRNA"/>
</dbReference>
<dbReference type="EMBL" id="AK007832">
    <property type="protein sequence ID" value="BAB25292.1"/>
    <property type="molecule type" value="mRNA"/>
</dbReference>
<dbReference type="EMBL" id="AK010656">
    <property type="protein sequence ID" value="BAB27095.1"/>
    <property type="molecule type" value="mRNA"/>
</dbReference>
<dbReference type="EMBL" id="AK088070">
    <property type="protein sequence ID" value="BAC40128.1"/>
    <property type="molecule type" value="mRNA"/>
</dbReference>
<dbReference type="EMBL" id="BC058685">
    <property type="protein sequence ID" value="AAH58685.1"/>
    <property type="molecule type" value="mRNA"/>
</dbReference>
<dbReference type="CCDS" id="CCDS23260.1"/>
<dbReference type="RefSeq" id="NP_061341.1">
    <property type="nucleotide sequence ID" value="NM_018853.3"/>
</dbReference>
<dbReference type="BMRB" id="P47955"/>
<dbReference type="SMR" id="P47955"/>
<dbReference type="BioGRID" id="207787">
    <property type="interactions" value="45"/>
</dbReference>
<dbReference type="ComplexPortal" id="CPX-5262">
    <property type="entry name" value="60S cytosolic large ribosomal subunit"/>
</dbReference>
<dbReference type="ComplexPortal" id="CPX-7662">
    <property type="entry name" value="60S cytosolic large ribosomal subunit, testis-specific variant"/>
</dbReference>
<dbReference type="ComplexPortal" id="CPX-7663">
    <property type="entry name" value="60S cytosolic large ribosomal subunit, striated muscle variant"/>
</dbReference>
<dbReference type="FunCoup" id="P47955">
    <property type="interactions" value="1179"/>
</dbReference>
<dbReference type="IntAct" id="P47955">
    <property type="interactions" value="3"/>
</dbReference>
<dbReference type="STRING" id="10090.ENSMUSP00000008036"/>
<dbReference type="GlyGen" id="P47955">
    <property type="glycosylation" value="1 site, 1 O-linked glycan (1 site)"/>
</dbReference>
<dbReference type="iPTMnet" id="P47955"/>
<dbReference type="PhosphoSitePlus" id="P47955"/>
<dbReference type="SwissPalm" id="P47955"/>
<dbReference type="jPOST" id="P47955"/>
<dbReference type="PaxDb" id="10090-ENSMUSP00000008036"/>
<dbReference type="PeptideAtlas" id="P47955"/>
<dbReference type="ProteomicsDB" id="300396"/>
<dbReference type="Pumba" id="P47955"/>
<dbReference type="TopDownProteomics" id="P47955"/>
<dbReference type="DNASU" id="56040"/>
<dbReference type="Ensembl" id="ENSMUST00000008036.9">
    <property type="protein sequence ID" value="ENSMUSP00000008036.8"/>
    <property type="gene ID" value="ENSMUSG00000007892.9"/>
</dbReference>
<dbReference type="GeneID" id="56040"/>
<dbReference type="KEGG" id="mmu:56040"/>
<dbReference type="UCSC" id="uc009pzt.1">
    <property type="organism name" value="mouse"/>
</dbReference>
<dbReference type="AGR" id="MGI:1927099"/>
<dbReference type="CTD" id="6176"/>
<dbReference type="MGI" id="MGI:1927099">
    <property type="gene designation" value="Rplp1"/>
</dbReference>
<dbReference type="VEuPathDB" id="HostDB:ENSMUSG00000007892"/>
<dbReference type="eggNOG" id="KOG1762">
    <property type="taxonomic scope" value="Eukaryota"/>
</dbReference>
<dbReference type="GeneTree" id="ENSGT00550000074698"/>
<dbReference type="HOGENOM" id="CLU_114656_1_2_1"/>
<dbReference type="InParanoid" id="P47955"/>
<dbReference type="OMA" id="REELMCV"/>
<dbReference type="OrthoDB" id="9631264at2759"/>
<dbReference type="PhylomeDB" id="P47955"/>
<dbReference type="TreeFam" id="TF312932"/>
<dbReference type="Reactome" id="R-MMU-156827">
    <property type="pathway name" value="L13a-mediated translational silencing of Ceruloplasmin expression"/>
</dbReference>
<dbReference type="Reactome" id="R-MMU-1799339">
    <property type="pathway name" value="SRP-dependent cotranslational protein targeting to membrane"/>
</dbReference>
<dbReference type="Reactome" id="R-MMU-6791226">
    <property type="pathway name" value="Major pathway of rRNA processing in the nucleolus and cytosol"/>
</dbReference>
<dbReference type="Reactome" id="R-MMU-72689">
    <property type="pathway name" value="Formation of a pool of free 40S subunits"/>
</dbReference>
<dbReference type="Reactome" id="R-MMU-72706">
    <property type="pathway name" value="GTP hydrolysis and joining of the 60S ribosomal subunit"/>
</dbReference>
<dbReference type="Reactome" id="R-MMU-975956">
    <property type="pathway name" value="Nonsense Mediated Decay (NMD) independent of the Exon Junction Complex (EJC)"/>
</dbReference>
<dbReference type="Reactome" id="R-MMU-975957">
    <property type="pathway name" value="Nonsense Mediated Decay (NMD) enhanced by the Exon Junction Complex (EJC)"/>
</dbReference>
<dbReference type="BioGRID-ORCS" id="56040">
    <property type="hits" value="25 hits in 73 CRISPR screens"/>
</dbReference>
<dbReference type="ChiTaRS" id="Rplp1">
    <property type="organism name" value="mouse"/>
</dbReference>
<dbReference type="PRO" id="PR:P47955"/>
<dbReference type="Proteomes" id="UP000000589">
    <property type="component" value="Chromosome 9"/>
</dbReference>
<dbReference type="RNAct" id="P47955">
    <property type="molecule type" value="protein"/>
</dbReference>
<dbReference type="Bgee" id="ENSMUSG00000007892">
    <property type="expression patterns" value="Expressed in mesodermal cell in embryo and 64 other cell types or tissues"/>
</dbReference>
<dbReference type="ExpressionAtlas" id="P47955">
    <property type="expression patterns" value="baseline and differential"/>
</dbReference>
<dbReference type="GO" id="GO:0005737">
    <property type="term" value="C:cytoplasm"/>
    <property type="evidence" value="ECO:0000314"/>
    <property type="project" value="ComplexPortal"/>
</dbReference>
<dbReference type="GO" id="GO:0005829">
    <property type="term" value="C:cytosol"/>
    <property type="evidence" value="ECO:0000304"/>
    <property type="project" value="Reactome"/>
</dbReference>
<dbReference type="GO" id="GO:0022625">
    <property type="term" value="C:cytosolic large ribosomal subunit"/>
    <property type="evidence" value="ECO:0000353"/>
    <property type="project" value="ComplexPortal"/>
</dbReference>
<dbReference type="GO" id="GO:0098794">
    <property type="term" value="C:postsynapse"/>
    <property type="evidence" value="ECO:0000303"/>
    <property type="project" value="SynGO"/>
</dbReference>
<dbReference type="GO" id="GO:0005840">
    <property type="term" value="C:ribosome"/>
    <property type="evidence" value="ECO:0000303"/>
    <property type="project" value="SynGO"/>
</dbReference>
<dbReference type="GO" id="GO:0045202">
    <property type="term" value="C:synapse"/>
    <property type="evidence" value="ECO:0000314"/>
    <property type="project" value="SynGO"/>
</dbReference>
<dbReference type="GO" id="GO:0003735">
    <property type="term" value="F:structural constituent of ribosome"/>
    <property type="evidence" value="ECO:0007669"/>
    <property type="project" value="InterPro"/>
</dbReference>
<dbReference type="GO" id="GO:0002181">
    <property type="term" value="P:cytoplasmic translation"/>
    <property type="evidence" value="ECO:0000303"/>
    <property type="project" value="ComplexPortal"/>
</dbReference>
<dbReference type="GO" id="GO:0006417">
    <property type="term" value="P:regulation of translation"/>
    <property type="evidence" value="ECO:0000315"/>
    <property type="project" value="MGI"/>
</dbReference>
<dbReference type="GO" id="GO:0006414">
    <property type="term" value="P:translational elongation"/>
    <property type="evidence" value="ECO:0007669"/>
    <property type="project" value="InterPro"/>
</dbReference>
<dbReference type="CDD" id="cd05831">
    <property type="entry name" value="Ribosomal_P1"/>
    <property type="match status" value="1"/>
</dbReference>
<dbReference type="FunFam" id="1.10.10.1410:FF:000001">
    <property type="entry name" value="60S acidic ribosomal protein P1"/>
    <property type="match status" value="1"/>
</dbReference>
<dbReference type="Gene3D" id="1.10.10.1410">
    <property type="match status" value="1"/>
</dbReference>
<dbReference type="HAMAP" id="MF_01478">
    <property type="entry name" value="Ribosomal_L12_arch"/>
    <property type="match status" value="1"/>
</dbReference>
<dbReference type="InterPro" id="IPR038716">
    <property type="entry name" value="P1/P2_N_sf"/>
</dbReference>
<dbReference type="InterPro" id="IPR027534">
    <property type="entry name" value="Ribosomal_P1/P2"/>
</dbReference>
<dbReference type="PANTHER" id="PTHR45696">
    <property type="entry name" value="60S ACIDIC RIBOSOMAL PROTEIN P1"/>
    <property type="match status" value="1"/>
</dbReference>
<dbReference type="PANTHER" id="PTHR45696:SF32">
    <property type="entry name" value="LARGE RIBOSOMAL SUBUNIT PROTEIN P1"/>
    <property type="match status" value="1"/>
</dbReference>
<dbReference type="Pfam" id="PF00428">
    <property type="entry name" value="Ribosomal_60s"/>
    <property type="match status" value="1"/>
</dbReference>
<organism>
    <name type="scientific">Mus musculus</name>
    <name type="common">Mouse</name>
    <dbReference type="NCBI Taxonomy" id="10090"/>
    <lineage>
        <taxon>Eukaryota</taxon>
        <taxon>Metazoa</taxon>
        <taxon>Chordata</taxon>
        <taxon>Craniata</taxon>
        <taxon>Vertebrata</taxon>
        <taxon>Euteleostomi</taxon>
        <taxon>Mammalia</taxon>
        <taxon>Eutheria</taxon>
        <taxon>Euarchontoglires</taxon>
        <taxon>Glires</taxon>
        <taxon>Rodentia</taxon>
        <taxon>Myomorpha</taxon>
        <taxon>Muroidea</taxon>
        <taxon>Muridae</taxon>
        <taxon>Murinae</taxon>
        <taxon>Mus</taxon>
        <taxon>Mus</taxon>
    </lineage>
</organism>
<evidence type="ECO:0000250" key="1"/>
<evidence type="ECO:0000250" key="2">
    <source>
        <dbReference type="UniProtKB" id="P05386"/>
    </source>
</evidence>
<evidence type="ECO:0000256" key="3">
    <source>
        <dbReference type="SAM" id="MobiDB-lite"/>
    </source>
</evidence>
<evidence type="ECO:0000305" key="4"/>
<proteinExistence type="evidence at protein level"/>
<comment type="function">
    <text>Plays an important role in the elongation step of protein synthesis.</text>
</comment>
<comment type="subunit">
    <text evidence="1">Heterodimer with RPLP2 at the lateral ribosomal stalk of the large ribosomal subunit.</text>
</comment>
<comment type="PTM">
    <text evidence="2">Ubiquitinated at Lys-92 and Lys-93 by RNF14 and RNF25 in response to ribosome collisions (ribosome stalling).</text>
</comment>
<comment type="similarity">
    <text evidence="4">Belongs to the eukaryotic ribosomal protein P1/P2 family.</text>
</comment>
<sequence length="114" mass="11475">MASVSELACIYSALILHDDEVTVTEDKINALIKAAGVSVEPFWPGLFAKALANVNIGSLICNVGAGGPAPAAGAAPAGGAAPSTAAAPAEEKKVEAKKEESEESEDDMGFGLFD</sequence>
<reference key="1">
    <citation type="submission" date="1995-06" db="EMBL/GenBank/DDBJ databases">
        <authorList>
            <person name="Crowe D.L."/>
            <person name="Cui X.M."/>
            <person name="Shuler C.F."/>
        </authorList>
    </citation>
    <scope>NUCLEOTIDE SEQUENCE [MRNA]</scope>
</reference>
<reference key="2">
    <citation type="journal article" date="2005" name="Science">
        <title>The transcriptional landscape of the mammalian genome.</title>
        <authorList>
            <person name="Carninci P."/>
            <person name="Kasukawa T."/>
            <person name="Katayama S."/>
            <person name="Gough J."/>
            <person name="Frith M.C."/>
            <person name="Maeda N."/>
            <person name="Oyama R."/>
            <person name="Ravasi T."/>
            <person name="Lenhard B."/>
            <person name="Wells C."/>
            <person name="Kodzius R."/>
            <person name="Shimokawa K."/>
            <person name="Bajic V.B."/>
            <person name="Brenner S.E."/>
            <person name="Batalov S."/>
            <person name="Forrest A.R."/>
            <person name="Zavolan M."/>
            <person name="Davis M.J."/>
            <person name="Wilming L.G."/>
            <person name="Aidinis V."/>
            <person name="Allen J.E."/>
            <person name="Ambesi-Impiombato A."/>
            <person name="Apweiler R."/>
            <person name="Aturaliya R.N."/>
            <person name="Bailey T.L."/>
            <person name="Bansal M."/>
            <person name="Baxter L."/>
            <person name="Beisel K.W."/>
            <person name="Bersano T."/>
            <person name="Bono H."/>
            <person name="Chalk A.M."/>
            <person name="Chiu K.P."/>
            <person name="Choudhary V."/>
            <person name="Christoffels A."/>
            <person name="Clutterbuck D.R."/>
            <person name="Crowe M.L."/>
            <person name="Dalla E."/>
            <person name="Dalrymple B.P."/>
            <person name="de Bono B."/>
            <person name="Della Gatta G."/>
            <person name="di Bernardo D."/>
            <person name="Down T."/>
            <person name="Engstrom P."/>
            <person name="Fagiolini M."/>
            <person name="Faulkner G."/>
            <person name="Fletcher C.F."/>
            <person name="Fukushima T."/>
            <person name="Furuno M."/>
            <person name="Futaki S."/>
            <person name="Gariboldi M."/>
            <person name="Georgii-Hemming P."/>
            <person name="Gingeras T.R."/>
            <person name="Gojobori T."/>
            <person name="Green R.E."/>
            <person name="Gustincich S."/>
            <person name="Harbers M."/>
            <person name="Hayashi Y."/>
            <person name="Hensch T.K."/>
            <person name="Hirokawa N."/>
            <person name="Hill D."/>
            <person name="Huminiecki L."/>
            <person name="Iacono M."/>
            <person name="Ikeo K."/>
            <person name="Iwama A."/>
            <person name="Ishikawa T."/>
            <person name="Jakt M."/>
            <person name="Kanapin A."/>
            <person name="Katoh M."/>
            <person name="Kawasawa Y."/>
            <person name="Kelso J."/>
            <person name="Kitamura H."/>
            <person name="Kitano H."/>
            <person name="Kollias G."/>
            <person name="Krishnan S.P."/>
            <person name="Kruger A."/>
            <person name="Kummerfeld S.K."/>
            <person name="Kurochkin I.V."/>
            <person name="Lareau L.F."/>
            <person name="Lazarevic D."/>
            <person name="Lipovich L."/>
            <person name="Liu J."/>
            <person name="Liuni S."/>
            <person name="McWilliam S."/>
            <person name="Madan Babu M."/>
            <person name="Madera M."/>
            <person name="Marchionni L."/>
            <person name="Matsuda H."/>
            <person name="Matsuzawa S."/>
            <person name="Miki H."/>
            <person name="Mignone F."/>
            <person name="Miyake S."/>
            <person name="Morris K."/>
            <person name="Mottagui-Tabar S."/>
            <person name="Mulder N."/>
            <person name="Nakano N."/>
            <person name="Nakauchi H."/>
            <person name="Ng P."/>
            <person name="Nilsson R."/>
            <person name="Nishiguchi S."/>
            <person name="Nishikawa S."/>
            <person name="Nori F."/>
            <person name="Ohara O."/>
            <person name="Okazaki Y."/>
            <person name="Orlando V."/>
            <person name="Pang K.C."/>
            <person name="Pavan W.J."/>
            <person name="Pavesi G."/>
            <person name="Pesole G."/>
            <person name="Petrovsky N."/>
            <person name="Piazza S."/>
            <person name="Reed J."/>
            <person name="Reid J.F."/>
            <person name="Ring B.Z."/>
            <person name="Ringwald M."/>
            <person name="Rost B."/>
            <person name="Ruan Y."/>
            <person name="Salzberg S.L."/>
            <person name="Sandelin A."/>
            <person name="Schneider C."/>
            <person name="Schoenbach C."/>
            <person name="Sekiguchi K."/>
            <person name="Semple C.A."/>
            <person name="Seno S."/>
            <person name="Sessa L."/>
            <person name="Sheng Y."/>
            <person name="Shibata Y."/>
            <person name="Shimada H."/>
            <person name="Shimada K."/>
            <person name="Silva D."/>
            <person name="Sinclair B."/>
            <person name="Sperling S."/>
            <person name="Stupka E."/>
            <person name="Sugiura K."/>
            <person name="Sultana R."/>
            <person name="Takenaka Y."/>
            <person name="Taki K."/>
            <person name="Tammoja K."/>
            <person name="Tan S.L."/>
            <person name="Tang S."/>
            <person name="Taylor M.S."/>
            <person name="Tegner J."/>
            <person name="Teichmann S.A."/>
            <person name="Ueda H.R."/>
            <person name="van Nimwegen E."/>
            <person name="Verardo R."/>
            <person name="Wei C.L."/>
            <person name="Yagi K."/>
            <person name="Yamanishi H."/>
            <person name="Zabarovsky E."/>
            <person name="Zhu S."/>
            <person name="Zimmer A."/>
            <person name="Hide W."/>
            <person name="Bult C."/>
            <person name="Grimmond S.M."/>
            <person name="Teasdale R.D."/>
            <person name="Liu E.T."/>
            <person name="Brusic V."/>
            <person name="Quackenbush J."/>
            <person name="Wahlestedt C."/>
            <person name="Mattick J.S."/>
            <person name="Hume D.A."/>
            <person name="Kai C."/>
            <person name="Sasaki D."/>
            <person name="Tomaru Y."/>
            <person name="Fukuda S."/>
            <person name="Kanamori-Katayama M."/>
            <person name="Suzuki M."/>
            <person name="Aoki J."/>
            <person name="Arakawa T."/>
            <person name="Iida J."/>
            <person name="Imamura K."/>
            <person name="Itoh M."/>
            <person name="Kato T."/>
            <person name="Kawaji H."/>
            <person name="Kawagashira N."/>
            <person name="Kawashima T."/>
            <person name="Kojima M."/>
            <person name="Kondo S."/>
            <person name="Konno H."/>
            <person name="Nakano K."/>
            <person name="Ninomiya N."/>
            <person name="Nishio T."/>
            <person name="Okada M."/>
            <person name="Plessy C."/>
            <person name="Shibata K."/>
            <person name="Shiraki T."/>
            <person name="Suzuki S."/>
            <person name="Tagami M."/>
            <person name="Waki K."/>
            <person name="Watahiki A."/>
            <person name="Okamura-Oho Y."/>
            <person name="Suzuki H."/>
            <person name="Kawai J."/>
            <person name="Hayashizaki Y."/>
        </authorList>
    </citation>
    <scope>NUCLEOTIDE SEQUENCE [LARGE SCALE MRNA]</scope>
    <source>
        <strain>C57BL/6J</strain>
        <tissue>Head</tissue>
        <tissue>Pancreas</tissue>
    </source>
</reference>
<reference key="3">
    <citation type="journal article" date="2004" name="Genome Res.">
        <title>The status, quality, and expansion of the NIH full-length cDNA project: the Mammalian Gene Collection (MGC).</title>
        <authorList>
            <consortium name="The MGC Project Team"/>
        </authorList>
    </citation>
    <scope>NUCLEOTIDE SEQUENCE [LARGE SCALE MRNA]</scope>
    <source>
        <strain>C57BL/6J</strain>
        <tissue>Brain</tissue>
    </source>
</reference>
<reference key="4">
    <citation type="journal article" date="2010" name="Cell">
        <title>A tissue-specific atlas of mouse protein phosphorylation and expression.</title>
        <authorList>
            <person name="Huttlin E.L."/>
            <person name="Jedrychowski M.P."/>
            <person name="Elias J.E."/>
            <person name="Goswami T."/>
            <person name="Rad R."/>
            <person name="Beausoleil S.A."/>
            <person name="Villen J."/>
            <person name="Haas W."/>
            <person name="Sowa M.E."/>
            <person name="Gygi S.P."/>
        </authorList>
    </citation>
    <scope>IDENTIFICATION BY MASS SPECTROMETRY [LARGE SCALE ANALYSIS]</scope>
    <source>
        <tissue>Brain</tissue>
        <tissue>Brown adipose tissue</tissue>
        <tissue>Heart</tissue>
        <tissue>Kidney</tissue>
        <tissue>Liver</tissue>
        <tissue>Lung</tissue>
        <tissue>Pancreas</tissue>
        <tissue>Spleen</tissue>
        <tissue>Testis</tissue>
    </source>
</reference>
<feature type="initiator methionine" description="Removed" evidence="2">
    <location>
        <position position="1"/>
    </location>
</feature>
<feature type="chain" id="PRO_0000157687" description="Large ribosomal subunit protein P1">
    <location>
        <begin position="2"/>
        <end position="114"/>
    </location>
</feature>
<feature type="region of interest" description="Disordered" evidence="3">
    <location>
        <begin position="69"/>
        <end position="114"/>
    </location>
</feature>
<feature type="compositionally biased region" description="Low complexity" evidence="3">
    <location>
        <begin position="69"/>
        <end position="88"/>
    </location>
</feature>
<feature type="compositionally biased region" description="Basic and acidic residues" evidence="3">
    <location>
        <begin position="89"/>
        <end position="100"/>
    </location>
</feature>
<feature type="modified residue" description="N-acetylalanine" evidence="2">
    <location>
        <position position="2"/>
    </location>
</feature>
<feature type="modified residue" description="Phosphoserine" evidence="2">
    <location>
        <position position="101"/>
    </location>
</feature>
<feature type="cross-link" description="Glycyl lysine isopeptide (Lys-Gly) (interchain with G-Cter in ubiquitin)" evidence="2">
    <location>
        <position position="92"/>
    </location>
</feature>
<feature type="cross-link" description="Glycyl lysine isopeptide (Lys-Gly) (interchain with G-Cter in ubiquitin)" evidence="2">
    <location>
        <position position="93"/>
    </location>
</feature>
<name>RLA1_MOUSE</name>
<protein>
    <recommendedName>
        <fullName evidence="4">Large ribosomal subunit protein P1</fullName>
    </recommendedName>
    <alternativeName>
        <fullName>60S acidic ribosomal protein P1</fullName>
    </alternativeName>
</protein>
<accession>P47955</accession>